<accession>B6ENA8</accession>
<evidence type="ECO:0000255" key="1">
    <source>
        <dbReference type="HAMAP-Rule" id="MF_00139"/>
    </source>
</evidence>
<evidence type="ECO:0000255" key="2">
    <source>
        <dbReference type="PROSITE-ProRule" id="PRU01202"/>
    </source>
</evidence>
<reference key="1">
    <citation type="journal article" date="2008" name="BMC Genomics">
        <title>The genome sequence of the fish pathogen Aliivibrio salmonicida strain LFI1238 shows extensive evidence of gene decay.</title>
        <authorList>
            <person name="Hjerde E."/>
            <person name="Lorentzen M.S."/>
            <person name="Holden M.T."/>
            <person name="Seeger K."/>
            <person name="Paulsen S."/>
            <person name="Bason N."/>
            <person name="Churcher C."/>
            <person name="Harris D."/>
            <person name="Norbertczak H."/>
            <person name="Quail M.A."/>
            <person name="Sanders S."/>
            <person name="Thurston S."/>
            <person name="Parkhill J."/>
            <person name="Willassen N.P."/>
            <person name="Thomson N.R."/>
        </authorList>
    </citation>
    <scope>NUCLEOTIDE SEQUENCE [LARGE SCALE GENOMIC DNA]</scope>
    <source>
        <strain>LFI1238</strain>
    </source>
</reference>
<protein>
    <recommendedName>
        <fullName evidence="1">Bifunctional purine biosynthesis protein PurH</fullName>
    </recommendedName>
    <domain>
        <recommendedName>
            <fullName evidence="1">Phosphoribosylaminoimidazolecarboxamide formyltransferase</fullName>
            <ecNumber evidence="1">2.1.2.3</ecNumber>
        </recommendedName>
        <alternativeName>
            <fullName evidence="1">AICAR transformylase</fullName>
        </alternativeName>
    </domain>
    <domain>
        <recommendedName>
            <fullName evidence="1">IMP cyclohydrolase</fullName>
            <ecNumber evidence="1">3.5.4.10</ecNumber>
        </recommendedName>
        <alternativeName>
            <fullName evidence="1">ATIC</fullName>
        </alternativeName>
        <alternativeName>
            <fullName evidence="1">IMP synthase</fullName>
        </alternativeName>
        <alternativeName>
            <fullName evidence="1">Inosinicase</fullName>
        </alternativeName>
    </domain>
</protein>
<comment type="catalytic activity">
    <reaction evidence="1">
        <text>(6R)-10-formyltetrahydrofolate + 5-amino-1-(5-phospho-beta-D-ribosyl)imidazole-4-carboxamide = 5-formamido-1-(5-phospho-D-ribosyl)imidazole-4-carboxamide + (6S)-5,6,7,8-tetrahydrofolate</text>
        <dbReference type="Rhea" id="RHEA:22192"/>
        <dbReference type="ChEBI" id="CHEBI:57453"/>
        <dbReference type="ChEBI" id="CHEBI:58467"/>
        <dbReference type="ChEBI" id="CHEBI:58475"/>
        <dbReference type="ChEBI" id="CHEBI:195366"/>
        <dbReference type="EC" id="2.1.2.3"/>
    </reaction>
</comment>
<comment type="catalytic activity">
    <reaction evidence="1">
        <text>IMP + H2O = 5-formamido-1-(5-phospho-D-ribosyl)imidazole-4-carboxamide</text>
        <dbReference type="Rhea" id="RHEA:18445"/>
        <dbReference type="ChEBI" id="CHEBI:15377"/>
        <dbReference type="ChEBI" id="CHEBI:58053"/>
        <dbReference type="ChEBI" id="CHEBI:58467"/>
        <dbReference type="EC" id="3.5.4.10"/>
    </reaction>
</comment>
<comment type="pathway">
    <text evidence="1">Purine metabolism; IMP biosynthesis via de novo pathway; 5-formamido-1-(5-phospho-D-ribosyl)imidazole-4-carboxamide from 5-amino-1-(5-phospho-D-ribosyl)imidazole-4-carboxamide (10-formyl THF route): step 1/1.</text>
</comment>
<comment type="pathway">
    <text evidence="1">Purine metabolism; IMP biosynthesis via de novo pathway; IMP from 5-formamido-1-(5-phospho-D-ribosyl)imidazole-4-carboxamide: step 1/1.</text>
</comment>
<comment type="domain">
    <text evidence="1">The IMP cyclohydrolase activity resides in the N-terminal region.</text>
</comment>
<comment type="similarity">
    <text evidence="1">Belongs to the PurH family.</text>
</comment>
<gene>
    <name evidence="1" type="primary">purH</name>
    <name type="ordered locus">VSAL_I2842</name>
</gene>
<dbReference type="EC" id="2.1.2.3" evidence="1"/>
<dbReference type="EC" id="3.5.4.10" evidence="1"/>
<dbReference type="EMBL" id="FM178379">
    <property type="protein sequence ID" value="CAQ80526.1"/>
    <property type="molecule type" value="Genomic_DNA"/>
</dbReference>
<dbReference type="RefSeq" id="WP_012551272.1">
    <property type="nucleotide sequence ID" value="NC_011312.1"/>
</dbReference>
<dbReference type="SMR" id="B6ENA8"/>
<dbReference type="KEGG" id="vsa:VSAL_I2842"/>
<dbReference type="eggNOG" id="COG0138">
    <property type="taxonomic scope" value="Bacteria"/>
</dbReference>
<dbReference type="HOGENOM" id="CLU_016316_5_2_6"/>
<dbReference type="UniPathway" id="UPA00074">
    <property type="reaction ID" value="UER00133"/>
</dbReference>
<dbReference type="UniPathway" id="UPA00074">
    <property type="reaction ID" value="UER00135"/>
</dbReference>
<dbReference type="Proteomes" id="UP000001730">
    <property type="component" value="Chromosome 1"/>
</dbReference>
<dbReference type="GO" id="GO:0005829">
    <property type="term" value="C:cytosol"/>
    <property type="evidence" value="ECO:0007669"/>
    <property type="project" value="TreeGrafter"/>
</dbReference>
<dbReference type="GO" id="GO:0003937">
    <property type="term" value="F:IMP cyclohydrolase activity"/>
    <property type="evidence" value="ECO:0007669"/>
    <property type="project" value="UniProtKB-UniRule"/>
</dbReference>
<dbReference type="GO" id="GO:0004643">
    <property type="term" value="F:phosphoribosylaminoimidazolecarboxamide formyltransferase activity"/>
    <property type="evidence" value="ECO:0007669"/>
    <property type="project" value="UniProtKB-UniRule"/>
</dbReference>
<dbReference type="GO" id="GO:0006189">
    <property type="term" value="P:'de novo' IMP biosynthetic process"/>
    <property type="evidence" value="ECO:0007669"/>
    <property type="project" value="UniProtKB-UniRule"/>
</dbReference>
<dbReference type="CDD" id="cd01421">
    <property type="entry name" value="IMPCH"/>
    <property type="match status" value="1"/>
</dbReference>
<dbReference type="FunFam" id="3.40.140.20:FF:000001">
    <property type="entry name" value="Bifunctional purine biosynthesis protein PurH"/>
    <property type="match status" value="1"/>
</dbReference>
<dbReference type="FunFam" id="3.40.140.20:FF:000002">
    <property type="entry name" value="Bifunctional purine biosynthesis protein PurH"/>
    <property type="match status" value="1"/>
</dbReference>
<dbReference type="FunFam" id="3.40.50.1380:FF:000001">
    <property type="entry name" value="Bifunctional purine biosynthesis protein PurH"/>
    <property type="match status" value="1"/>
</dbReference>
<dbReference type="Gene3D" id="3.40.140.20">
    <property type="match status" value="2"/>
</dbReference>
<dbReference type="Gene3D" id="3.40.50.1380">
    <property type="entry name" value="Methylglyoxal synthase-like domain"/>
    <property type="match status" value="1"/>
</dbReference>
<dbReference type="HAMAP" id="MF_00139">
    <property type="entry name" value="PurH"/>
    <property type="match status" value="1"/>
</dbReference>
<dbReference type="InterPro" id="IPR024051">
    <property type="entry name" value="AICAR_Tfase_dup_dom_sf"/>
</dbReference>
<dbReference type="InterPro" id="IPR016193">
    <property type="entry name" value="Cytidine_deaminase-like"/>
</dbReference>
<dbReference type="InterPro" id="IPR011607">
    <property type="entry name" value="MGS-like_dom"/>
</dbReference>
<dbReference type="InterPro" id="IPR036914">
    <property type="entry name" value="MGS-like_dom_sf"/>
</dbReference>
<dbReference type="InterPro" id="IPR002695">
    <property type="entry name" value="PurH-like"/>
</dbReference>
<dbReference type="NCBIfam" id="NF002049">
    <property type="entry name" value="PRK00881.1"/>
    <property type="match status" value="1"/>
</dbReference>
<dbReference type="NCBIfam" id="TIGR00355">
    <property type="entry name" value="purH"/>
    <property type="match status" value="1"/>
</dbReference>
<dbReference type="PANTHER" id="PTHR11692:SF0">
    <property type="entry name" value="BIFUNCTIONAL PURINE BIOSYNTHESIS PROTEIN ATIC"/>
    <property type="match status" value="1"/>
</dbReference>
<dbReference type="PANTHER" id="PTHR11692">
    <property type="entry name" value="BIFUNCTIONAL PURINE BIOSYNTHESIS PROTEIN PURH"/>
    <property type="match status" value="1"/>
</dbReference>
<dbReference type="Pfam" id="PF01808">
    <property type="entry name" value="AICARFT_IMPCHas"/>
    <property type="match status" value="1"/>
</dbReference>
<dbReference type="Pfam" id="PF02142">
    <property type="entry name" value="MGS"/>
    <property type="match status" value="1"/>
</dbReference>
<dbReference type="PIRSF" id="PIRSF000414">
    <property type="entry name" value="AICARFT_IMPCHas"/>
    <property type="match status" value="1"/>
</dbReference>
<dbReference type="SMART" id="SM00798">
    <property type="entry name" value="AICARFT_IMPCHas"/>
    <property type="match status" value="1"/>
</dbReference>
<dbReference type="SMART" id="SM00851">
    <property type="entry name" value="MGS"/>
    <property type="match status" value="1"/>
</dbReference>
<dbReference type="SUPFAM" id="SSF53927">
    <property type="entry name" value="Cytidine deaminase-like"/>
    <property type="match status" value="1"/>
</dbReference>
<dbReference type="SUPFAM" id="SSF52335">
    <property type="entry name" value="Methylglyoxal synthase-like"/>
    <property type="match status" value="1"/>
</dbReference>
<dbReference type="PROSITE" id="PS51855">
    <property type="entry name" value="MGS"/>
    <property type="match status" value="1"/>
</dbReference>
<organism>
    <name type="scientific">Aliivibrio salmonicida (strain LFI1238)</name>
    <name type="common">Vibrio salmonicida (strain LFI1238)</name>
    <dbReference type="NCBI Taxonomy" id="316275"/>
    <lineage>
        <taxon>Bacteria</taxon>
        <taxon>Pseudomonadati</taxon>
        <taxon>Pseudomonadota</taxon>
        <taxon>Gammaproteobacteria</taxon>
        <taxon>Vibrionales</taxon>
        <taxon>Vibrionaceae</taxon>
        <taxon>Aliivibrio</taxon>
    </lineage>
</organism>
<sequence>MNNPRPIRRALISVSDKTGIVEFAQALTERGVDILSTGGTARLLAEKNIPVTEVSDYTGFPEMMDGRVKTLHPKVHGGVLGRRGQDDGIMEQHGINPIDIVVVNLYPFAETVAKEGCTLADAVENIDIGGPTMVRSAAKNHKDVTIVVNAHDYDRVIAEMDTNDKSLTQATRFDLAIAAFEHTASYDGMIANYFGTMVPSYGENKEGDNESKFPRTFNQQFEKKQDMRYGENSHQAAAFYVEANPEEASVSTARQIQGKALSYNNIADTDAALECVKEFNEPACVIVKHANPCGVALGKDVLEAYHRAYQTDPTSAFGGIIAFNRELDAATATAITERQFVEVIIAPSVSAEAIEIIAAKKNLRLLECGEWSTKTTEFDIKRVNGGLLVQDRDQGMVSEDELEVVSKRQPTAEELKDALFCWKVAKYVKSNAIVYSKGDMTIGVGAGQMSRVYSAKIAGIKAADEGLVVEGCAMASDAFFPFRDGIDAAAEAGIKCVIQPGGSMRDDEVIAAADEHGMAMIFTGMRHFRH</sequence>
<keyword id="KW-0378">Hydrolase</keyword>
<keyword id="KW-0511">Multifunctional enzyme</keyword>
<keyword id="KW-0658">Purine biosynthesis</keyword>
<keyword id="KW-0808">Transferase</keyword>
<name>PUR9_ALISL</name>
<feature type="chain" id="PRO_1000096037" description="Bifunctional purine biosynthesis protein PurH">
    <location>
        <begin position="1"/>
        <end position="530"/>
    </location>
</feature>
<feature type="domain" description="MGS-like" evidence="2">
    <location>
        <begin position="1"/>
        <end position="148"/>
    </location>
</feature>
<proteinExistence type="inferred from homology"/>